<accession>B7N2I6</accession>
<evidence type="ECO:0000255" key="1">
    <source>
        <dbReference type="HAMAP-Rule" id="MF_01522"/>
    </source>
</evidence>
<comment type="function">
    <text evidence="1">Responsible for the low-affinity transport of potassium into the cell. Likely operates as a K(+):H(+) symporter.</text>
</comment>
<comment type="catalytic activity">
    <reaction evidence="1">
        <text>K(+)(in) + H(+)(in) = K(+)(out) + H(+)(out)</text>
        <dbReference type="Rhea" id="RHEA:28490"/>
        <dbReference type="ChEBI" id="CHEBI:15378"/>
        <dbReference type="ChEBI" id="CHEBI:29103"/>
    </reaction>
    <physiologicalReaction direction="right-to-left" evidence="1">
        <dbReference type="Rhea" id="RHEA:28492"/>
    </physiologicalReaction>
</comment>
<comment type="subcellular location">
    <subcellularLocation>
        <location evidence="1">Cell inner membrane</location>
        <topology evidence="1">Multi-pass membrane protein</topology>
    </subcellularLocation>
</comment>
<comment type="similarity">
    <text evidence="1">Belongs to the HAK/KUP transporter (TC 2.A.72) family.</text>
</comment>
<gene>
    <name evidence="1" type="primary">kup</name>
    <name type="ordered locus">ECED1_4437</name>
</gene>
<feature type="chain" id="PRO_1000185118" description="Low affinity potassium transport system protein Kup">
    <location>
        <begin position="1"/>
        <end position="622"/>
    </location>
</feature>
<feature type="transmembrane region" description="Helical" evidence="1">
    <location>
        <begin position="9"/>
        <end position="29"/>
    </location>
</feature>
<feature type="transmembrane region" description="Helical" evidence="1">
    <location>
        <begin position="49"/>
        <end position="69"/>
    </location>
</feature>
<feature type="transmembrane region" description="Helical" evidence="1">
    <location>
        <begin position="103"/>
        <end position="123"/>
    </location>
</feature>
<feature type="transmembrane region" description="Helical" evidence="1">
    <location>
        <begin position="137"/>
        <end position="157"/>
    </location>
</feature>
<feature type="transmembrane region" description="Helical" evidence="1">
    <location>
        <begin position="165"/>
        <end position="185"/>
    </location>
</feature>
<feature type="transmembrane region" description="Helical" evidence="1">
    <location>
        <begin position="213"/>
        <end position="233"/>
    </location>
</feature>
<feature type="transmembrane region" description="Helical" evidence="1">
    <location>
        <begin position="247"/>
        <end position="267"/>
    </location>
</feature>
<feature type="transmembrane region" description="Helical" evidence="1">
    <location>
        <begin position="276"/>
        <end position="296"/>
    </location>
</feature>
<feature type="transmembrane region" description="Helical" evidence="1">
    <location>
        <begin position="337"/>
        <end position="357"/>
    </location>
</feature>
<feature type="transmembrane region" description="Helical" evidence="1">
    <location>
        <begin position="363"/>
        <end position="383"/>
    </location>
</feature>
<feature type="transmembrane region" description="Helical" evidence="1">
    <location>
        <begin position="396"/>
        <end position="416"/>
    </location>
</feature>
<feature type="transmembrane region" description="Helical" evidence="1">
    <location>
        <begin position="419"/>
        <end position="439"/>
    </location>
</feature>
<dbReference type="EMBL" id="CU928162">
    <property type="protein sequence ID" value="CAR10557.2"/>
    <property type="molecule type" value="Genomic_DNA"/>
</dbReference>
<dbReference type="RefSeq" id="WP_000102319.1">
    <property type="nucleotide sequence ID" value="NC_011745.1"/>
</dbReference>
<dbReference type="GeneID" id="75205465"/>
<dbReference type="KEGG" id="ecq:ECED1_4437"/>
<dbReference type="HOGENOM" id="CLU_008142_4_2_6"/>
<dbReference type="Proteomes" id="UP000000748">
    <property type="component" value="Chromosome"/>
</dbReference>
<dbReference type="GO" id="GO:0005886">
    <property type="term" value="C:plasma membrane"/>
    <property type="evidence" value="ECO:0007669"/>
    <property type="project" value="UniProtKB-SubCell"/>
</dbReference>
<dbReference type="GO" id="GO:0015079">
    <property type="term" value="F:potassium ion transmembrane transporter activity"/>
    <property type="evidence" value="ECO:0007669"/>
    <property type="project" value="UniProtKB-UniRule"/>
</dbReference>
<dbReference type="GO" id="GO:0015293">
    <property type="term" value="F:symporter activity"/>
    <property type="evidence" value="ECO:0007669"/>
    <property type="project" value="UniProtKB-UniRule"/>
</dbReference>
<dbReference type="HAMAP" id="MF_01522">
    <property type="entry name" value="Kup"/>
    <property type="match status" value="1"/>
</dbReference>
<dbReference type="InterPro" id="IPR003855">
    <property type="entry name" value="K+_transporter"/>
</dbReference>
<dbReference type="InterPro" id="IPR053952">
    <property type="entry name" value="K_trans_C"/>
</dbReference>
<dbReference type="InterPro" id="IPR053951">
    <property type="entry name" value="K_trans_N"/>
</dbReference>
<dbReference type="InterPro" id="IPR023051">
    <property type="entry name" value="Kup"/>
</dbReference>
<dbReference type="NCBIfam" id="TIGR00794">
    <property type="entry name" value="kup"/>
    <property type="match status" value="1"/>
</dbReference>
<dbReference type="NCBIfam" id="NF008015">
    <property type="entry name" value="PRK10745.1"/>
    <property type="match status" value="1"/>
</dbReference>
<dbReference type="PANTHER" id="PTHR30540:SF79">
    <property type="entry name" value="LOW AFFINITY POTASSIUM TRANSPORT SYSTEM PROTEIN KUP"/>
    <property type="match status" value="1"/>
</dbReference>
<dbReference type="PANTHER" id="PTHR30540">
    <property type="entry name" value="OSMOTIC STRESS POTASSIUM TRANSPORTER"/>
    <property type="match status" value="1"/>
</dbReference>
<dbReference type="Pfam" id="PF02705">
    <property type="entry name" value="K_trans"/>
    <property type="match status" value="1"/>
</dbReference>
<dbReference type="Pfam" id="PF22776">
    <property type="entry name" value="K_trans_C"/>
    <property type="match status" value="1"/>
</dbReference>
<proteinExistence type="inferred from homology"/>
<reference key="1">
    <citation type="journal article" date="2009" name="PLoS Genet.">
        <title>Organised genome dynamics in the Escherichia coli species results in highly diverse adaptive paths.</title>
        <authorList>
            <person name="Touchon M."/>
            <person name="Hoede C."/>
            <person name="Tenaillon O."/>
            <person name="Barbe V."/>
            <person name="Baeriswyl S."/>
            <person name="Bidet P."/>
            <person name="Bingen E."/>
            <person name="Bonacorsi S."/>
            <person name="Bouchier C."/>
            <person name="Bouvet O."/>
            <person name="Calteau A."/>
            <person name="Chiapello H."/>
            <person name="Clermont O."/>
            <person name="Cruveiller S."/>
            <person name="Danchin A."/>
            <person name="Diard M."/>
            <person name="Dossat C."/>
            <person name="Karoui M.E."/>
            <person name="Frapy E."/>
            <person name="Garry L."/>
            <person name="Ghigo J.M."/>
            <person name="Gilles A.M."/>
            <person name="Johnson J."/>
            <person name="Le Bouguenec C."/>
            <person name="Lescat M."/>
            <person name="Mangenot S."/>
            <person name="Martinez-Jehanne V."/>
            <person name="Matic I."/>
            <person name="Nassif X."/>
            <person name="Oztas S."/>
            <person name="Petit M.A."/>
            <person name="Pichon C."/>
            <person name="Rouy Z."/>
            <person name="Ruf C.S."/>
            <person name="Schneider D."/>
            <person name="Tourret J."/>
            <person name="Vacherie B."/>
            <person name="Vallenet D."/>
            <person name="Medigue C."/>
            <person name="Rocha E.P.C."/>
            <person name="Denamur E."/>
        </authorList>
    </citation>
    <scope>NUCLEOTIDE SEQUENCE [LARGE SCALE GENOMIC DNA]</scope>
    <source>
        <strain>ED1a</strain>
    </source>
</reference>
<name>KUP_ECO81</name>
<sequence length="622" mass="69294">MSTDNKQSLPAITLAAIGVVYGDIGTSPLYTLRECLSGQFGFGVERDAVFGFLSLIFWLLIFVVSIKYLTFVMRADNAGEGGILTLMSLAGRNTSARTTSMLVIMGLIGGSFFYGEVVITPAISVMSAIEGLEIVAPQLDTWIVPLSIIVLTLLFMIQKHGTAMVGKLFAPIMLTWFLILAGLGLRSIIANPEVLHALNPMWAVHFFLEYKTVSFIALGAVVLSITGVEALYADMGHFGKFPIRLAWFTVVLPSLTLNYFGQGALLLKNPEAIKNPFFLLAPDWALIPLLIIAALATVIASQAVISGVFSLTRQAVRLGYLSPMRIIHTSEMESGQIYIPFVNWMLYVAVVIVIVSFEHSSNLAAAYGIAVTGTMVLTSILSTTVARQNWHWNKYFVALILIAFLCVDIPLFTANLDKLLSGGWLPLSLGTVMFIVMTTWKSERFRLLRRMHEHGNSLEAMIASLEKSPPVRVPGTAVYMSRAINVIPFALMHNLKHNKVLHERVILLTLRTEDAPYVHNVRRVQIEQLSPTFWRVVASYGWRETPNVEEVFHRCGLEGLSCRMMETSFFMSHESLILGKRPWYLRLRGKLYLLLQRNALRAPDQFEIPPNRVIELGTQVEI</sequence>
<organism>
    <name type="scientific">Escherichia coli O81 (strain ED1a)</name>
    <dbReference type="NCBI Taxonomy" id="585397"/>
    <lineage>
        <taxon>Bacteria</taxon>
        <taxon>Pseudomonadati</taxon>
        <taxon>Pseudomonadota</taxon>
        <taxon>Gammaproteobacteria</taxon>
        <taxon>Enterobacterales</taxon>
        <taxon>Enterobacteriaceae</taxon>
        <taxon>Escherichia</taxon>
    </lineage>
</organism>
<keyword id="KW-0997">Cell inner membrane</keyword>
<keyword id="KW-1003">Cell membrane</keyword>
<keyword id="KW-0406">Ion transport</keyword>
<keyword id="KW-0472">Membrane</keyword>
<keyword id="KW-0630">Potassium</keyword>
<keyword id="KW-0633">Potassium transport</keyword>
<keyword id="KW-0769">Symport</keyword>
<keyword id="KW-0812">Transmembrane</keyword>
<keyword id="KW-1133">Transmembrane helix</keyword>
<keyword id="KW-0813">Transport</keyword>
<protein>
    <recommendedName>
        <fullName evidence="1">Low affinity potassium transport system protein Kup</fullName>
    </recommendedName>
    <alternativeName>
        <fullName evidence="1">Kup system potassium uptake protein</fullName>
    </alternativeName>
</protein>